<proteinExistence type="evidence at protein level"/>
<gene>
    <name type="primary">POLD1</name>
</gene>
<name>DPOD1_BOVIN</name>
<feature type="chain" id="PRO_0000046441" description="DNA polymerase delta catalytic subunit">
    <location>
        <begin position="1"/>
        <end position="1106"/>
    </location>
</feature>
<feature type="zinc finger region" description="CysA-type">
    <location>
        <begin position="1011"/>
        <end position="1028"/>
    </location>
</feature>
<feature type="region of interest" description="Disordered" evidence="4">
    <location>
        <begin position="1"/>
        <end position="28"/>
    </location>
</feature>
<feature type="short sequence motif" description="Nuclear localization signal" evidence="3">
    <location>
        <begin position="4"/>
        <end position="19"/>
    </location>
</feature>
<feature type="short sequence motif" description="CysB motif">
    <location>
        <begin position="1057"/>
        <end position="1075"/>
    </location>
</feature>
<feature type="binding site" evidence="1">
    <location>
        <position position="1011"/>
    </location>
    <ligand>
        <name>Zn(2+)</name>
        <dbReference type="ChEBI" id="CHEBI:29105"/>
    </ligand>
</feature>
<feature type="binding site" evidence="1">
    <location>
        <position position="1014"/>
    </location>
    <ligand>
        <name>Zn(2+)</name>
        <dbReference type="ChEBI" id="CHEBI:29105"/>
    </ligand>
</feature>
<feature type="binding site" evidence="1">
    <location>
        <position position="1025"/>
    </location>
    <ligand>
        <name>Zn(2+)</name>
        <dbReference type="ChEBI" id="CHEBI:29105"/>
    </ligand>
</feature>
<feature type="binding site" evidence="1">
    <location>
        <position position="1028"/>
    </location>
    <ligand>
        <name>Zn(2+)</name>
        <dbReference type="ChEBI" id="CHEBI:29105"/>
    </ligand>
</feature>
<feature type="binding site" evidence="1">
    <location>
        <position position="1057"/>
    </location>
    <ligand>
        <name>[4Fe-4S] cluster</name>
        <dbReference type="ChEBI" id="CHEBI:49883"/>
    </ligand>
</feature>
<feature type="binding site" evidence="1">
    <location>
        <position position="1060"/>
    </location>
    <ligand>
        <name>[4Fe-4S] cluster</name>
        <dbReference type="ChEBI" id="CHEBI:49883"/>
    </ligand>
</feature>
<feature type="binding site" evidence="1">
    <location>
        <position position="1070"/>
    </location>
    <ligand>
        <name>[4Fe-4S] cluster</name>
        <dbReference type="ChEBI" id="CHEBI:49883"/>
    </ligand>
</feature>
<feature type="binding site" evidence="1">
    <location>
        <position position="1075"/>
    </location>
    <ligand>
        <name>[4Fe-4S] cluster</name>
        <dbReference type="ChEBI" id="CHEBI:49883"/>
    </ligand>
</feature>
<feature type="modified residue" description="Omega-N-methylarginine" evidence="2">
    <location>
        <position position="19"/>
    </location>
</feature>
<feature type="cross-link" description="Glycyl lysine isopeptide (Lys-Gly) (interchain with G-Cter in SUMO2)" evidence="2">
    <location>
        <position position="573"/>
    </location>
</feature>
<organism>
    <name type="scientific">Bos taurus</name>
    <name type="common">Bovine</name>
    <dbReference type="NCBI Taxonomy" id="9913"/>
    <lineage>
        <taxon>Eukaryota</taxon>
        <taxon>Metazoa</taxon>
        <taxon>Chordata</taxon>
        <taxon>Craniata</taxon>
        <taxon>Vertebrata</taxon>
        <taxon>Euteleostomi</taxon>
        <taxon>Mammalia</taxon>
        <taxon>Eutheria</taxon>
        <taxon>Laurasiatheria</taxon>
        <taxon>Artiodactyla</taxon>
        <taxon>Ruminantia</taxon>
        <taxon>Pecora</taxon>
        <taxon>Bovidae</taxon>
        <taxon>Bovinae</taxon>
        <taxon>Bos</taxon>
    </lineage>
</organism>
<sequence>MDGKRRPGPGPGVPPKRARGGLWDEDEAYRPSQFEEELALMEEMEAERRLQEQEEEELQSALEAADGQFSPTAIDARWLRPAPPALDPQMEPLIFQQLEIDHYVAPARPLPGAPPPSQDSVPILRAFGVTNEGVSVCCHIHGFAPYFYTPAPPGFGPEHLSELQRELSAAISRDQRGGKELTGPAVLAVELCSRESMFGYHGHGPSPFLRITLALPRLMAPARRLLEQGIRLAGLGTPSFAPYEANVDFEIRFMVDTDIVGCNWLELPAGKYILRPEGKATLCQLEADVLWSDVISHPPEGEWQRIAPLRVLSFDIECAGRKGIFPEPERDPVIQICSLGLRWGEPEPFLRLALTLRPCAPILGAKVQSYEREEDLLQAWSTFIRIMDPDVITGYNIQNFDLPYLISRAQTLKVPGFPLLGRVIGLRSNIRESSFQSRQTGRRDSKVVSMVGRVQMDMLQVLLREYKLRSYTLNAVSFHFLGEQKEDVQHSIITDLQNGNDQTRRRLAVYCLKDAFLPLRLLERLMVLVNAMEMARVTGVPLGYLLSRGQQVKVVSQLLRQAMRQGLLMPVVKTEGGEDYTGATVIEPLKGYYDVPIATLDFSSLYPSIMMAHNLCYTTLLRPGAAQKLGLTEDQFIKTPTGDEFVKASVRKGLLPQILENLLSARKRAKAELAKETDPLRRQVLDGRQLALKVSANSVYGFTGAQVGRLPCLEISQSVTGFGRQMIEKTKQLVETKYTVENGYSTSAKVVYGDTDSVMCRFGVSSVAEAMALGREAADWVSGHFPSPIRLEFEKVYFPYLLISKKRYAGLLFSSRPDAHDRMDCKGLEAVRRDNCPLVANLVTASLRRLLIDRDPSGAVAHAQDVISDLLCNRIDISQLVITKELTRAAADYAGKQAHVELAERMRKRDPGSAPSLGDRVPYVIISAAKGVAAYMKSEDPLFVLEHSLPIDTQYYLEQQLAKPLLRIFEPILGEGRAEAVLLRGDHTRCKTVLTGKVGGLLAFAKRRNCCIGCRTVLSHQGAVCKFCQPRESELYQKEVSHLSALEERFSRLWTQCQRCQGSLHEDVICTSRDCPIFYMRKKVRKDLEDQERLLRRFGPPGPEAW</sequence>
<evidence type="ECO:0000250" key="1"/>
<evidence type="ECO:0000250" key="2">
    <source>
        <dbReference type="UniProtKB" id="P28340"/>
    </source>
</evidence>
<evidence type="ECO:0000255" key="3"/>
<evidence type="ECO:0000256" key="4">
    <source>
        <dbReference type="SAM" id="MobiDB-lite"/>
    </source>
</evidence>
<evidence type="ECO:0000269" key="5">
    <source>
    </source>
</evidence>
<evidence type="ECO:0000269" key="6">
    <source>
    </source>
</evidence>
<evidence type="ECO:0000269" key="7">
    <source>
    </source>
</evidence>
<evidence type="ECO:0000305" key="8"/>
<dbReference type="EC" id="2.7.7.7" evidence="2"/>
<dbReference type="EC" id="3.1.11.-" evidence="2"/>
<dbReference type="EMBL" id="M80395">
    <property type="protein sequence ID" value="AAA30493.1"/>
    <property type="molecule type" value="mRNA"/>
</dbReference>
<dbReference type="PIR" id="A39299">
    <property type="entry name" value="A39299"/>
</dbReference>
<dbReference type="RefSeq" id="NP_776852.1">
    <property type="nucleotide sequence ID" value="NM_174427.2"/>
</dbReference>
<dbReference type="SMR" id="P28339"/>
<dbReference type="CORUM" id="P28339"/>
<dbReference type="FunCoup" id="P28339">
    <property type="interactions" value="2136"/>
</dbReference>
<dbReference type="IntAct" id="P28339">
    <property type="interactions" value="4"/>
</dbReference>
<dbReference type="STRING" id="9913.ENSBTAP00000014714"/>
<dbReference type="PaxDb" id="9913-ENSBTAP00000014714"/>
<dbReference type="GeneID" id="281990"/>
<dbReference type="KEGG" id="bta:281990"/>
<dbReference type="CTD" id="5424"/>
<dbReference type="eggNOG" id="KOG0969">
    <property type="taxonomic scope" value="Eukaryota"/>
</dbReference>
<dbReference type="InParanoid" id="P28339"/>
<dbReference type="OrthoDB" id="2414538at2759"/>
<dbReference type="Proteomes" id="UP000009136">
    <property type="component" value="Unplaced"/>
</dbReference>
<dbReference type="GO" id="GO:0043625">
    <property type="term" value="C:delta DNA polymerase complex"/>
    <property type="evidence" value="ECO:0000314"/>
    <property type="project" value="UniProtKB"/>
</dbReference>
<dbReference type="GO" id="GO:0008296">
    <property type="term" value="F:3'-5'-DNA exonuclease activity"/>
    <property type="evidence" value="ECO:0000318"/>
    <property type="project" value="GO_Central"/>
</dbReference>
<dbReference type="GO" id="GO:0051539">
    <property type="term" value="F:4 iron, 4 sulfur cluster binding"/>
    <property type="evidence" value="ECO:0007669"/>
    <property type="project" value="UniProtKB-KW"/>
</dbReference>
<dbReference type="GO" id="GO:0003682">
    <property type="term" value="F:chromatin binding"/>
    <property type="evidence" value="ECO:0000250"/>
    <property type="project" value="UniProtKB"/>
</dbReference>
<dbReference type="GO" id="GO:0003684">
    <property type="term" value="F:damaged DNA binding"/>
    <property type="evidence" value="ECO:0000250"/>
    <property type="project" value="UniProtKB"/>
</dbReference>
<dbReference type="GO" id="GO:0003887">
    <property type="term" value="F:DNA-directed DNA polymerase activity"/>
    <property type="evidence" value="ECO:0000318"/>
    <property type="project" value="GO_Central"/>
</dbReference>
<dbReference type="GO" id="GO:0000166">
    <property type="term" value="F:nucleotide binding"/>
    <property type="evidence" value="ECO:0007669"/>
    <property type="project" value="InterPro"/>
</dbReference>
<dbReference type="GO" id="GO:0008270">
    <property type="term" value="F:zinc ion binding"/>
    <property type="evidence" value="ECO:0007669"/>
    <property type="project" value="UniProtKB-KW"/>
</dbReference>
<dbReference type="GO" id="GO:0006287">
    <property type="term" value="P:base-excision repair, gap-filling"/>
    <property type="evidence" value="ECO:0000318"/>
    <property type="project" value="GO_Central"/>
</dbReference>
<dbReference type="GO" id="GO:0034644">
    <property type="term" value="P:cellular response to UV"/>
    <property type="evidence" value="ECO:0000250"/>
    <property type="project" value="UniProtKB"/>
</dbReference>
<dbReference type="GO" id="GO:0071897">
    <property type="term" value="P:DNA biosynthetic process"/>
    <property type="evidence" value="ECO:0000314"/>
    <property type="project" value="UniProtKB"/>
</dbReference>
<dbReference type="GO" id="GO:0045004">
    <property type="term" value="P:DNA replication proofreading"/>
    <property type="evidence" value="ECO:0000318"/>
    <property type="project" value="GO_Central"/>
</dbReference>
<dbReference type="GO" id="GO:0000731">
    <property type="term" value="P:DNA synthesis involved in DNA repair"/>
    <property type="evidence" value="ECO:0000250"/>
    <property type="project" value="UniProtKB"/>
</dbReference>
<dbReference type="GO" id="GO:0006261">
    <property type="term" value="P:DNA-templated DNA replication"/>
    <property type="evidence" value="ECO:0000318"/>
    <property type="project" value="GO_Central"/>
</dbReference>
<dbReference type="GO" id="GO:0070987">
    <property type="term" value="P:error-free translesion synthesis"/>
    <property type="evidence" value="ECO:0000250"/>
    <property type="project" value="UniProtKB"/>
</dbReference>
<dbReference type="GO" id="GO:0055089">
    <property type="term" value="P:fatty acid homeostasis"/>
    <property type="evidence" value="ECO:0000250"/>
    <property type="project" value="UniProtKB"/>
</dbReference>
<dbReference type="GO" id="GO:0006297">
    <property type="term" value="P:nucleotide-excision repair, DNA gap filling"/>
    <property type="evidence" value="ECO:0000318"/>
    <property type="project" value="GO_Central"/>
</dbReference>
<dbReference type="CDD" id="cd05777">
    <property type="entry name" value="DNA_polB_delta_exo"/>
    <property type="match status" value="1"/>
</dbReference>
<dbReference type="CDD" id="cd05533">
    <property type="entry name" value="POLBc_delta"/>
    <property type="match status" value="1"/>
</dbReference>
<dbReference type="FunFam" id="1.10.132.60:FF:000001">
    <property type="entry name" value="DNA polymerase"/>
    <property type="match status" value="1"/>
</dbReference>
<dbReference type="FunFam" id="1.10.287.690:FF:000001">
    <property type="entry name" value="DNA polymerase"/>
    <property type="match status" value="1"/>
</dbReference>
<dbReference type="FunFam" id="3.30.342.10:FF:000003">
    <property type="entry name" value="DNA polymerase"/>
    <property type="match status" value="1"/>
</dbReference>
<dbReference type="FunFam" id="3.30.420.10:FF:000351">
    <property type="entry name" value="DNA polymerase"/>
    <property type="match status" value="1"/>
</dbReference>
<dbReference type="Gene3D" id="1.10.132.60">
    <property type="entry name" value="DNA polymerase family B, C-terminal domain"/>
    <property type="match status" value="1"/>
</dbReference>
<dbReference type="Gene3D" id="3.30.342.10">
    <property type="entry name" value="DNA Polymerase, chain B, domain 1"/>
    <property type="match status" value="1"/>
</dbReference>
<dbReference type="Gene3D" id="1.10.287.690">
    <property type="entry name" value="Helix hairpin bin"/>
    <property type="match status" value="1"/>
</dbReference>
<dbReference type="Gene3D" id="3.90.1600.10">
    <property type="entry name" value="Palm domain of DNA polymerase"/>
    <property type="match status" value="1"/>
</dbReference>
<dbReference type="Gene3D" id="3.30.420.10">
    <property type="entry name" value="Ribonuclease H-like superfamily/Ribonuclease H"/>
    <property type="match status" value="1"/>
</dbReference>
<dbReference type="InterPro" id="IPR006172">
    <property type="entry name" value="DNA-dir_DNA_pol_B"/>
</dbReference>
<dbReference type="InterPro" id="IPR017964">
    <property type="entry name" value="DNA-dir_DNA_pol_B_CS"/>
</dbReference>
<dbReference type="InterPro" id="IPR006133">
    <property type="entry name" value="DNA-dir_DNA_pol_B_exonuc"/>
</dbReference>
<dbReference type="InterPro" id="IPR006134">
    <property type="entry name" value="DNA-dir_DNA_pol_B_multi_dom"/>
</dbReference>
<dbReference type="InterPro" id="IPR043502">
    <property type="entry name" value="DNA/RNA_pol_sf"/>
</dbReference>
<dbReference type="InterPro" id="IPR042087">
    <property type="entry name" value="DNA_pol_B_thumb"/>
</dbReference>
<dbReference type="InterPro" id="IPR023211">
    <property type="entry name" value="DNA_pol_palm_dom_sf"/>
</dbReference>
<dbReference type="InterPro" id="IPR050240">
    <property type="entry name" value="DNA_pol_type-B"/>
</dbReference>
<dbReference type="InterPro" id="IPR056435">
    <property type="entry name" value="DPOD/Z_N"/>
</dbReference>
<dbReference type="InterPro" id="IPR012337">
    <property type="entry name" value="RNaseH-like_sf"/>
</dbReference>
<dbReference type="InterPro" id="IPR036397">
    <property type="entry name" value="RNaseH_sf"/>
</dbReference>
<dbReference type="InterPro" id="IPR025687">
    <property type="entry name" value="Znf-C4pol"/>
</dbReference>
<dbReference type="NCBIfam" id="TIGR00592">
    <property type="entry name" value="pol2"/>
    <property type="match status" value="1"/>
</dbReference>
<dbReference type="PANTHER" id="PTHR10322">
    <property type="entry name" value="DNA POLYMERASE CATALYTIC SUBUNIT"/>
    <property type="match status" value="1"/>
</dbReference>
<dbReference type="PANTHER" id="PTHR10322:SF23">
    <property type="entry name" value="DNA POLYMERASE DELTA CATALYTIC SUBUNIT"/>
    <property type="match status" value="1"/>
</dbReference>
<dbReference type="Pfam" id="PF00136">
    <property type="entry name" value="DNA_pol_B"/>
    <property type="match status" value="1"/>
</dbReference>
<dbReference type="Pfam" id="PF03104">
    <property type="entry name" value="DNA_pol_B_exo1"/>
    <property type="match status" value="1"/>
</dbReference>
<dbReference type="Pfam" id="PF24055">
    <property type="entry name" value="POL3_N"/>
    <property type="match status" value="1"/>
</dbReference>
<dbReference type="Pfam" id="PF14260">
    <property type="entry name" value="zf-C4pol"/>
    <property type="match status" value="1"/>
</dbReference>
<dbReference type="PRINTS" id="PR00106">
    <property type="entry name" value="DNAPOLB"/>
</dbReference>
<dbReference type="SMART" id="SM00486">
    <property type="entry name" value="POLBc"/>
    <property type="match status" value="1"/>
</dbReference>
<dbReference type="SUPFAM" id="SSF56672">
    <property type="entry name" value="DNA/RNA polymerases"/>
    <property type="match status" value="1"/>
</dbReference>
<dbReference type="SUPFAM" id="SSF53098">
    <property type="entry name" value="Ribonuclease H-like"/>
    <property type="match status" value="1"/>
</dbReference>
<dbReference type="PROSITE" id="PS00116">
    <property type="entry name" value="DNA_POLYMERASE_B"/>
    <property type="match status" value="1"/>
</dbReference>
<comment type="function">
    <text evidence="2">As the catalytic component of the trimeric (Pol-delta3 complex) and tetrameric DNA polymerase delta complexes (Pol-delta4 complex), plays a crucial role in high fidelity genome replication, including in lagging strand synthesis, and repair. Exhibits both DNA polymerase and 3'- to 5'-exonuclease activities. Requires the presence of accessory proteins POLD2, POLD3 and POLD4 for full activity. Depending upon the absence (Pol-delta3) or the presence of POLD4 (Pol-delta4), displays differences in catalytic activity. Most notably, expresses higher proofreading activity in the context of Pol-delta3 compared with that of Pol-delta4. Although both Pol-delta3 and Pol-delta4 process Okazaki fragments in vitro, Pol-delta3 may be better suited to fulfill this task, exhibiting near-absence of strand displacement activity compared to Pol-delta4 and stalling on encounter with the 5'-blocking oligonucleotides. Pol-delta3 idling process may avoid the formation of a gap, while maintaining a nick that can be readily ligated. Along with DNA polymerase kappa, DNA polymerase delta carries out approximately half of nucleotide excision repair (NER) synthesis following UV irradiation. Under conditions of DNA replication stress, in the presence of POLD3 and POLD4, may catalyze the repair of broken replication forks through break-induced replication (BIR). Involved in the translesion synthesis (TLS) of templates carrying O6-methylguanine, 8oxoG or abasic sites.</text>
</comment>
<comment type="catalytic activity">
    <reaction evidence="2">
        <text>DNA(n) + a 2'-deoxyribonucleoside 5'-triphosphate = DNA(n+1) + diphosphate</text>
        <dbReference type="Rhea" id="RHEA:22508"/>
        <dbReference type="Rhea" id="RHEA-COMP:17339"/>
        <dbReference type="Rhea" id="RHEA-COMP:17340"/>
        <dbReference type="ChEBI" id="CHEBI:33019"/>
        <dbReference type="ChEBI" id="CHEBI:61560"/>
        <dbReference type="ChEBI" id="CHEBI:173112"/>
        <dbReference type="EC" id="2.7.7.7"/>
    </reaction>
</comment>
<comment type="cofactor">
    <cofactor evidence="1">
        <name>[4Fe-4S] cluster</name>
        <dbReference type="ChEBI" id="CHEBI:49883"/>
    </cofactor>
    <text evidence="1">Binds 1 [4Fe-4S] cluster.</text>
</comment>
<comment type="activity regulation">
    <text evidence="2 6">Regulated by alteration of quaternary structure. Exhibits burst rates of DNA synthesis are about 5 times faster in the presence of POLD4 (Pol-delta4 complex) than in its absence (Pol-delta3 complex), while the affinity of the enzyme for its DNA and dNTP substrates appears unchanged. The Pol-delta3 complex is more likely to proofread DNA synthesis because it cleaves single-stranded DNA twice as fast and transfers mismatched DNA from the polymerase to the exonuclease sites 9 times faster compared to the Pol-delta3 complex. Pol-delta3 also extends mismatched primers 3 times more slowly in the absence of POLD4. The conversion of Pol-delta4 into Pol-delta3 is induced by genotoxic stress or by replication stress leading POLD4 degradation (By similarity). Stimulated in the presence of PCNA (By similarity). This stimulation is further increased in the presence of KCTD13/PDIP1, most probably via direct interaction between KCTD13 and POLD2 (PubMed:11593007).</text>
</comment>
<comment type="subunit">
    <text evidence="2 5 7">Component of the tetrameric DNA polymerase delta complex (Pol-delta4), which consists of POLD1/p125, POLD2/p50, POLD3/p66/p68 and POLD4/p12, with POLD1 bearing both DNA polymerase and 3' to 5' proofreading exonuclease activities (PubMed:10751307). Within Pol-delta4, directly interacts with POLD2 and POLD4. Following genotoxic stress by DNA-damaging agents, such as ultraviolet light and methyl methanesulfonate, or by replication stress induced by treatment with hydroxyurea or aphidicolin, Pol-delta4 is converted into a trimeric form of the complex (Pol-delta3) by POLD4 degradation. Pol-delta3 is the major form at S phase replication sites and DNA damage sites. POLD1 displays different catalytic properties depending upon the complex it is found in. It exhibits higher proofreading activity and fidelity than Pol-delta4, making it particularly well suited to respond to DNA damage. Directly interacts with PCNA, as do POLD3 and POLD4; this interaction stimulates Pol-delta4 polymerase activity. As POLD2 and POLD4, directly interacts with WRNIP1; this interaction stimulates DNA polymerase delta-mediated DNA synthesis, independently of the presence of PCNA. This stimulation may be due predominantly to an increase of initiation frequency and also to increased processivity. Also observed as a dimeric complex with POLD2 (Pol-delta2). Pol-delta2 is relatively insensitive to the PCNA stimulation (2-5-fold) compared to Pol-delta4 that is stimulated by over 50-fold (By similarity). Interacts with POLDIP2; this interaction is indirect and most probably mediated through POLD2-binding (By similarity) (PubMed:10751307, PubMed:12522211). Interacts with CIAO1 (By similarity). Interacts with POLDIP2 (By similarity). Interacts with RFC1 (By similarity).</text>
</comment>
<comment type="subcellular location">
    <subcellularLocation>
        <location evidence="2">Nucleus</location>
    </subcellularLocation>
    <text evidence="2">Colocalizes with PCNA and POLD3 at S phase replication sites. After UV irradiation, recruited to DNA damage sites within 2 hours, independently on the cell cycle phase, nor on PCNA ubiquitination. This recruitment requires POLD3, PCNA and RFC1-replication factor C complex.</text>
</comment>
<comment type="domain">
    <text evidence="1">The CysB motif binds 1 4Fe-4S cluster and is required for the formation of polymerase complexes.</text>
</comment>
<comment type="miscellaneous">
    <text>In eukaryotes there are five DNA polymerases: alpha, beta, gamma, delta, and epsilon which are responsible for different reactions of DNA synthesis.</text>
</comment>
<comment type="similarity">
    <text evidence="8">Belongs to the DNA polymerase type-B family.</text>
</comment>
<accession>P28339</accession>
<protein>
    <recommendedName>
        <fullName evidence="8">DNA polymerase delta catalytic subunit</fullName>
        <ecNumber evidence="2">2.7.7.7</ecNumber>
    </recommendedName>
    <alternativeName>
        <fullName evidence="8">3'-5' exodeoxyribonuclease</fullName>
        <ecNumber evidence="2">3.1.11.-</ecNumber>
    </alternativeName>
</protein>
<keyword id="KW-0004">4Fe-4S</keyword>
<keyword id="KW-0903">Direct protein sequencing</keyword>
<keyword id="KW-0227">DNA damage</keyword>
<keyword id="KW-0228">DNA excision</keyword>
<keyword id="KW-0234">DNA repair</keyword>
<keyword id="KW-0235">DNA replication</keyword>
<keyword id="KW-0238">DNA-binding</keyword>
<keyword id="KW-0239">DNA-directed DNA polymerase</keyword>
<keyword id="KW-0269">Exonuclease</keyword>
<keyword id="KW-0378">Hydrolase</keyword>
<keyword id="KW-0408">Iron</keyword>
<keyword id="KW-0411">Iron-sulfur</keyword>
<keyword id="KW-1017">Isopeptide bond</keyword>
<keyword id="KW-0479">Metal-binding</keyword>
<keyword id="KW-0488">Methylation</keyword>
<keyword id="KW-0540">Nuclease</keyword>
<keyword id="KW-0548">Nucleotidyltransferase</keyword>
<keyword id="KW-0539">Nucleus</keyword>
<keyword id="KW-1185">Reference proteome</keyword>
<keyword id="KW-0808">Transferase</keyword>
<keyword id="KW-0832">Ubl conjugation</keyword>
<keyword id="KW-0862">Zinc</keyword>
<keyword id="KW-0863">Zinc-finger</keyword>
<reference key="1">
    <citation type="journal article" date="1991" name="Biochemistry">
        <title>Primary structure of the catalytic subunit of calf thymus DNA polymerase delta: sequence similarities with other DNA polymerases.</title>
        <authorList>
            <person name="Zhang J."/>
            <person name="Chung D.W."/>
            <person name="Tan C.-K."/>
            <person name="Downey K.M."/>
            <person name="Davie E.W."/>
            <person name="So A.G."/>
        </authorList>
    </citation>
    <scope>NUCLEOTIDE SEQUENCE [MRNA]</scope>
</reference>
<reference key="2">
    <citation type="journal article" date="2000" name="J. Biol. Chem.">
        <title>Identification of a fourth subunit of mammalian DNA polymerase delta.</title>
        <authorList>
            <person name="Liu L."/>
            <person name="Mo J.-Y."/>
            <person name="Rodriguez-Belmonte E.M."/>
            <person name="Lee M.Y.W.T."/>
        </authorList>
    </citation>
    <scope>PROTEIN SEQUENCE OF 910-930 AND 968-977</scope>
    <scope>IDENTIFICATION IN POL-DELTA COMPLEX</scope>
    <scope>MASS SPECTROMETRY</scope>
    <source>
        <tissue>Thymus</tissue>
    </source>
</reference>
<reference key="3">
    <citation type="journal article" date="2001" name="Proc. Natl. Acad. Sci. U.S.A.">
        <title>A tumor necrosis factor alpha- and interleukin 6-inducible protein that interacts with the small subunit of DNA polymerase delta and proliferating cell nuclear antigen.</title>
        <authorList>
            <person name="He H."/>
            <person name="Tan C.-K."/>
            <person name="Downey K.M."/>
            <person name="So A.G."/>
        </authorList>
    </citation>
    <scope>ACTIVITY REGULATION BY KCTD13</scope>
</reference>
<reference key="4">
    <citation type="journal article" date="2003" name="J. Biol. Chem.">
        <title>Identification of a novel protein, PDIP38, that interacts with the p50 subunit of DNA polymerase delta and proliferating cell nuclear antigen.</title>
        <authorList>
            <person name="Liu L."/>
            <person name="Rodriguez-Belmonte E.M."/>
            <person name="Mazloum N."/>
            <person name="Xie B."/>
            <person name="Lee M.Y.W.T."/>
        </authorList>
    </citation>
    <scope>INTERACTION WITH POLDIP2</scope>
</reference>